<name>THII_VIBC1</name>
<keyword id="KW-0067">ATP-binding</keyword>
<keyword id="KW-0963">Cytoplasm</keyword>
<keyword id="KW-1015">Disulfide bond</keyword>
<keyword id="KW-0547">Nucleotide-binding</keyword>
<keyword id="KW-0676">Redox-active center</keyword>
<keyword id="KW-0694">RNA-binding</keyword>
<keyword id="KW-0784">Thiamine biosynthesis</keyword>
<keyword id="KW-0808">Transferase</keyword>
<keyword id="KW-0820">tRNA-binding</keyword>
<comment type="function">
    <text evidence="1">Catalyzes the ATP-dependent transfer of a sulfur to tRNA to produce 4-thiouridine in position 8 of tRNAs, which functions as a near-UV photosensor. Also catalyzes the transfer of sulfur to the sulfur carrier protein ThiS, forming ThiS-thiocarboxylate. This is a step in the synthesis of thiazole, in the thiamine biosynthesis pathway. The sulfur is donated as persulfide by IscS.</text>
</comment>
<comment type="catalytic activity">
    <reaction evidence="1">
        <text>[ThiI sulfur-carrier protein]-S-sulfanyl-L-cysteine + a uridine in tRNA + 2 reduced [2Fe-2S]-[ferredoxin] + ATP + H(+) = [ThiI sulfur-carrier protein]-L-cysteine + a 4-thiouridine in tRNA + 2 oxidized [2Fe-2S]-[ferredoxin] + AMP + diphosphate</text>
        <dbReference type="Rhea" id="RHEA:24176"/>
        <dbReference type="Rhea" id="RHEA-COMP:10000"/>
        <dbReference type="Rhea" id="RHEA-COMP:10001"/>
        <dbReference type="Rhea" id="RHEA-COMP:13337"/>
        <dbReference type="Rhea" id="RHEA-COMP:13338"/>
        <dbReference type="Rhea" id="RHEA-COMP:13339"/>
        <dbReference type="Rhea" id="RHEA-COMP:13340"/>
        <dbReference type="ChEBI" id="CHEBI:15378"/>
        <dbReference type="ChEBI" id="CHEBI:29950"/>
        <dbReference type="ChEBI" id="CHEBI:30616"/>
        <dbReference type="ChEBI" id="CHEBI:33019"/>
        <dbReference type="ChEBI" id="CHEBI:33737"/>
        <dbReference type="ChEBI" id="CHEBI:33738"/>
        <dbReference type="ChEBI" id="CHEBI:61963"/>
        <dbReference type="ChEBI" id="CHEBI:65315"/>
        <dbReference type="ChEBI" id="CHEBI:136798"/>
        <dbReference type="ChEBI" id="CHEBI:456215"/>
        <dbReference type="EC" id="2.8.1.4"/>
    </reaction>
</comment>
<comment type="catalytic activity">
    <reaction evidence="1">
        <text>[ThiS sulfur-carrier protein]-C-terminal Gly-Gly-AMP + S-sulfanyl-L-cysteinyl-[cysteine desulfurase] + AH2 = [ThiS sulfur-carrier protein]-C-terminal-Gly-aminoethanethioate + L-cysteinyl-[cysteine desulfurase] + A + AMP + 2 H(+)</text>
        <dbReference type="Rhea" id="RHEA:43340"/>
        <dbReference type="Rhea" id="RHEA-COMP:12157"/>
        <dbReference type="Rhea" id="RHEA-COMP:12158"/>
        <dbReference type="Rhea" id="RHEA-COMP:12910"/>
        <dbReference type="Rhea" id="RHEA-COMP:19908"/>
        <dbReference type="ChEBI" id="CHEBI:13193"/>
        <dbReference type="ChEBI" id="CHEBI:15378"/>
        <dbReference type="ChEBI" id="CHEBI:17499"/>
        <dbReference type="ChEBI" id="CHEBI:29950"/>
        <dbReference type="ChEBI" id="CHEBI:61963"/>
        <dbReference type="ChEBI" id="CHEBI:90618"/>
        <dbReference type="ChEBI" id="CHEBI:232372"/>
        <dbReference type="ChEBI" id="CHEBI:456215"/>
    </reaction>
</comment>
<comment type="pathway">
    <text evidence="1">Cofactor biosynthesis; thiamine diphosphate biosynthesis.</text>
</comment>
<comment type="subcellular location">
    <subcellularLocation>
        <location evidence="1">Cytoplasm</location>
    </subcellularLocation>
</comment>
<comment type="similarity">
    <text evidence="1">Belongs to the ThiI family.</text>
</comment>
<gene>
    <name evidence="1" type="primary">thiI</name>
    <name type="ordered locus">VIBHAR_01178</name>
</gene>
<sequence>MKFIVKPHPEIFVKSESVRKRFTKILECNIRNIVKSRTESVAVFNRRDHIEVTSESDEFHAEVLEILTHTPGIRHVLEVKQTEFKDLHDIYEQVLELSGSLIEGKTFAVRAKRRGKHDFTSIELERYVGGGLNQAVESARVKLSKPDVTINVEVTNDRLNQVLASHKGLGGFPLGTQEDVLSLISGGFDSGVSSYLHIKRGSKVHYCFFNLGGPAHEIGVKQVSHYLWNKYGSSAKVRFISVDFEPVVAEILEKVDDGQMGVILKRMFMRAAGMIAQKMKIEALVTGEALGQVSSQTLTNLRHIDNVTDTLILRPLINWDKEDIVNLAREIGTEDFAKTMPEYCGVISKKPTVKAVKGKLEAEEQKFDFSILEQVVQDARMTDIRDIAKESKQAAPEVEQVQAVEEHAIVLDIRSPEEEDDNSLEIDGVEVKHIPFYKLGTQFGDLDQAKTYLLYCDRGVMSRLQALYLQEQGFNNVKVYRP</sequence>
<accession>A7MYC5</accession>
<protein>
    <recommendedName>
        <fullName evidence="1">tRNA sulfurtransferase</fullName>
        <ecNumber evidence="1">2.8.1.4</ecNumber>
    </recommendedName>
    <alternativeName>
        <fullName evidence="1">Sulfur carrier protein ThiS sulfurtransferase</fullName>
    </alternativeName>
    <alternativeName>
        <fullName evidence="1">Thiamine biosynthesis protein ThiI</fullName>
    </alternativeName>
    <alternativeName>
        <fullName evidence="1">tRNA 4-thiouridine synthase</fullName>
    </alternativeName>
</protein>
<organism>
    <name type="scientific">Vibrio campbellii (strain ATCC BAA-1116)</name>
    <dbReference type="NCBI Taxonomy" id="2902295"/>
    <lineage>
        <taxon>Bacteria</taxon>
        <taxon>Pseudomonadati</taxon>
        <taxon>Pseudomonadota</taxon>
        <taxon>Gammaproteobacteria</taxon>
        <taxon>Vibrionales</taxon>
        <taxon>Vibrionaceae</taxon>
        <taxon>Vibrio</taxon>
    </lineage>
</organism>
<dbReference type="EC" id="2.8.1.4" evidence="1"/>
<dbReference type="EMBL" id="CP000789">
    <property type="protein sequence ID" value="ABU70168.1"/>
    <property type="molecule type" value="Genomic_DNA"/>
</dbReference>
<dbReference type="RefSeq" id="WP_012127164.1">
    <property type="nucleotide sequence ID" value="NC_009783.1"/>
</dbReference>
<dbReference type="SMR" id="A7MYC5"/>
<dbReference type="KEGG" id="vha:VIBHAR_01178"/>
<dbReference type="PATRIC" id="fig|338187.25.peg.1451"/>
<dbReference type="UniPathway" id="UPA00060"/>
<dbReference type="Proteomes" id="UP000008152">
    <property type="component" value="Chromosome I"/>
</dbReference>
<dbReference type="GO" id="GO:0005829">
    <property type="term" value="C:cytosol"/>
    <property type="evidence" value="ECO:0007669"/>
    <property type="project" value="TreeGrafter"/>
</dbReference>
<dbReference type="GO" id="GO:0005524">
    <property type="term" value="F:ATP binding"/>
    <property type="evidence" value="ECO:0007669"/>
    <property type="project" value="UniProtKB-UniRule"/>
</dbReference>
<dbReference type="GO" id="GO:0004810">
    <property type="term" value="F:CCA tRNA nucleotidyltransferase activity"/>
    <property type="evidence" value="ECO:0007669"/>
    <property type="project" value="InterPro"/>
</dbReference>
<dbReference type="GO" id="GO:0000049">
    <property type="term" value="F:tRNA binding"/>
    <property type="evidence" value="ECO:0007669"/>
    <property type="project" value="UniProtKB-UniRule"/>
</dbReference>
<dbReference type="GO" id="GO:0140741">
    <property type="term" value="F:tRNA-uracil-4 sulfurtransferase activity"/>
    <property type="evidence" value="ECO:0007669"/>
    <property type="project" value="UniProtKB-EC"/>
</dbReference>
<dbReference type="GO" id="GO:0009228">
    <property type="term" value="P:thiamine biosynthetic process"/>
    <property type="evidence" value="ECO:0007669"/>
    <property type="project" value="UniProtKB-KW"/>
</dbReference>
<dbReference type="GO" id="GO:0009229">
    <property type="term" value="P:thiamine diphosphate biosynthetic process"/>
    <property type="evidence" value="ECO:0007669"/>
    <property type="project" value="UniProtKB-UniRule"/>
</dbReference>
<dbReference type="GO" id="GO:0052837">
    <property type="term" value="P:thiazole biosynthetic process"/>
    <property type="evidence" value="ECO:0007669"/>
    <property type="project" value="InterPro"/>
</dbReference>
<dbReference type="GO" id="GO:0002937">
    <property type="term" value="P:tRNA 4-thiouridine biosynthesis"/>
    <property type="evidence" value="ECO:0007669"/>
    <property type="project" value="TreeGrafter"/>
</dbReference>
<dbReference type="CDD" id="cd01712">
    <property type="entry name" value="PPase_ThiI"/>
    <property type="match status" value="1"/>
</dbReference>
<dbReference type="CDD" id="cd00158">
    <property type="entry name" value="RHOD"/>
    <property type="match status" value="1"/>
</dbReference>
<dbReference type="CDD" id="cd11716">
    <property type="entry name" value="THUMP_ThiI"/>
    <property type="match status" value="1"/>
</dbReference>
<dbReference type="FunFam" id="3.40.50.620:FF:000029">
    <property type="entry name" value="tRNA sulfurtransferase"/>
    <property type="match status" value="1"/>
</dbReference>
<dbReference type="Gene3D" id="3.30.2130.30">
    <property type="match status" value="1"/>
</dbReference>
<dbReference type="Gene3D" id="3.40.50.620">
    <property type="entry name" value="HUPs"/>
    <property type="match status" value="1"/>
</dbReference>
<dbReference type="Gene3D" id="3.40.250.10">
    <property type="entry name" value="Rhodanese-like domain"/>
    <property type="match status" value="1"/>
</dbReference>
<dbReference type="HAMAP" id="MF_00021">
    <property type="entry name" value="ThiI"/>
    <property type="match status" value="1"/>
</dbReference>
<dbReference type="InterPro" id="IPR001763">
    <property type="entry name" value="Rhodanese-like_dom"/>
</dbReference>
<dbReference type="InterPro" id="IPR036873">
    <property type="entry name" value="Rhodanese-like_dom_sf"/>
</dbReference>
<dbReference type="InterPro" id="IPR014729">
    <property type="entry name" value="Rossmann-like_a/b/a_fold"/>
</dbReference>
<dbReference type="InterPro" id="IPR020536">
    <property type="entry name" value="ThiI_AANH"/>
</dbReference>
<dbReference type="InterPro" id="IPR054173">
    <property type="entry name" value="ThiI_fer"/>
</dbReference>
<dbReference type="InterPro" id="IPR049961">
    <property type="entry name" value="ThiI_N"/>
</dbReference>
<dbReference type="InterPro" id="IPR026340">
    <property type="entry name" value="THII_Thiazole_biosynth_dom"/>
</dbReference>
<dbReference type="InterPro" id="IPR004114">
    <property type="entry name" value="THUMP_dom"/>
</dbReference>
<dbReference type="InterPro" id="IPR049962">
    <property type="entry name" value="THUMP_ThiI"/>
</dbReference>
<dbReference type="InterPro" id="IPR003720">
    <property type="entry name" value="tRNA_STrfase"/>
</dbReference>
<dbReference type="InterPro" id="IPR050102">
    <property type="entry name" value="tRNA_sulfurtransferase_ThiI"/>
</dbReference>
<dbReference type="NCBIfam" id="TIGR04271">
    <property type="entry name" value="ThiI_C_thiazole"/>
    <property type="match status" value="1"/>
</dbReference>
<dbReference type="NCBIfam" id="TIGR00342">
    <property type="entry name" value="tRNA uracil 4-sulfurtransferase ThiI"/>
    <property type="match status" value="1"/>
</dbReference>
<dbReference type="PANTHER" id="PTHR43209">
    <property type="entry name" value="TRNA SULFURTRANSFERASE"/>
    <property type="match status" value="1"/>
</dbReference>
<dbReference type="PANTHER" id="PTHR43209:SF1">
    <property type="entry name" value="TRNA SULFURTRANSFERASE"/>
    <property type="match status" value="1"/>
</dbReference>
<dbReference type="Pfam" id="PF00581">
    <property type="entry name" value="Rhodanese"/>
    <property type="match status" value="1"/>
</dbReference>
<dbReference type="Pfam" id="PF02568">
    <property type="entry name" value="ThiI"/>
    <property type="match status" value="1"/>
</dbReference>
<dbReference type="Pfam" id="PF22025">
    <property type="entry name" value="ThiI_fer"/>
    <property type="match status" value="1"/>
</dbReference>
<dbReference type="Pfam" id="PF02926">
    <property type="entry name" value="THUMP"/>
    <property type="match status" value="1"/>
</dbReference>
<dbReference type="SMART" id="SM00981">
    <property type="entry name" value="THUMP"/>
    <property type="match status" value="1"/>
</dbReference>
<dbReference type="SUPFAM" id="SSF52402">
    <property type="entry name" value="Adenine nucleotide alpha hydrolases-like"/>
    <property type="match status" value="1"/>
</dbReference>
<dbReference type="SUPFAM" id="SSF52821">
    <property type="entry name" value="Rhodanese/Cell cycle control phosphatase"/>
    <property type="match status" value="1"/>
</dbReference>
<dbReference type="SUPFAM" id="SSF143437">
    <property type="entry name" value="THUMP domain-like"/>
    <property type="match status" value="1"/>
</dbReference>
<dbReference type="PROSITE" id="PS50206">
    <property type="entry name" value="RHODANESE_3"/>
    <property type="match status" value="1"/>
</dbReference>
<dbReference type="PROSITE" id="PS51165">
    <property type="entry name" value="THUMP"/>
    <property type="match status" value="1"/>
</dbReference>
<evidence type="ECO:0000255" key="1">
    <source>
        <dbReference type="HAMAP-Rule" id="MF_00021"/>
    </source>
</evidence>
<proteinExistence type="inferred from homology"/>
<reference key="1">
    <citation type="submission" date="2007-08" db="EMBL/GenBank/DDBJ databases">
        <authorList>
            <consortium name="The Vibrio harveyi Genome Sequencing Project"/>
            <person name="Bassler B."/>
            <person name="Clifton S.W."/>
            <person name="Fulton L."/>
            <person name="Delehaunty K."/>
            <person name="Fronick C."/>
            <person name="Harrison M."/>
            <person name="Markivic C."/>
            <person name="Fulton R."/>
            <person name="Tin-Wollam A.-M."/>
            <person name="Shah N."/>
            <person name="Pepin K."/>
            <person name="Nash W."/>
            <person name="Thiruvilangam P."/>
            <person name="Bhonagiri V."/>
            <person name="Waters C."/>
            <person name="Tu K.C."/>
            <person name="Irgon J."/>
            <person name="Wilson R.K."/>
        </authorList>
    </citation>
    <scope>NUCLEOTIDE SEQUENCE [LARGE SCALE GENOMIC DNA]</scope>
    <source>
        <strain>ATCC BAA-1116 / BB120</strain>
    </source>
</reference>
<feature type="chain" id="PRO_1000074307" description="tRNA sulfurtransferase">
    <location>
        <begin position="1"/>
        <end position="482"/>
    </location>
</feature>
<feature type="domain" description="THUMP" evidence="1">
    <location>
        <begin position="61"/>
        <end position="165"/>
    </location>
</feature>
<feature type="domain" description="Rhodanese" evidence="1">
    <location>
        <begin position="404"/>
        <end position="482"/>
    </location>
</feature>
<feature type="active site" description="Cysteine persulfide intermediate" evidence="1">
    <location>
        <position position="456"/>
    </location>
</feature>
<feature type="binding site" evidence="1">
    <location>
        <begin position="183"/>
        <end position="184"/>
    </location>
    <ligand>
        <name>ATP</name>
        <dbReference type="ChEBI" id="CHEBI:30616"/>
    </ligand>
</feature>
<feature type="binding site" evidence="1">
    <location>
        <position position="265"/>
    </location>
    <ligand>
        <name>ATP</name>
        <dbReference type="ChEBI" id="CHEBI:30616"/>
    </ligand>
</feature>
<feature type="binding site" evidence="1">
    <location>
        <position position="287"/>
    </location>
    <ligand>
        <name>ATP</name>
        <dbReference type="ChEBI" id="CHEBI:30616"/>
    </ligand>
</feature>
<feature type="binding site" evidence="1">
    <location>
        <position position="296"/>
    </location>
    <ligand>
        <name>ATP</name>
        <dbReference type="ChEBI" id="CHEBI:30616"/>
    </ligand>
</feature>
<feature type="disulfide bond" description="Redox-active" evidence="1">
    <location>
        <begin position="344"/>
        <end position="456"/>
    </location>
</feature>